<organism>
    <name type="scientific">Salmonella schwarzengrund (strain CVM19633)</name>
    <dbReference type="NCBI Taxonomy" id="439843"/>
    <lineage>
        <taxon>Bacteria</taxon>
        <taxon>Pseudomonadati</taxon>
        <taxon>Pseudomonadota</taxon>
        <taxon>Gammaproteobacteria</taxon>
        <taxon>Enterobacterales</taxon>
        <taxon>Enterobacteriaceae</taxon>
        <taxon>Salmonella</taxon>
    </lineage>
</organism>
<protein>
    <recommendedName>
        <fullName evidence="1">Adenosine deaminase</fullName>
        <ecNumber evidence="1">3.5.4.4</ecNumber>
    </recommendedName>
    <alternativeName>
        <fullName evidence="1">Adenosine aminohydrolase</fullName>
    </alternativeName>
</protein>
<sequence>MIDITLPLTDIHRHLDGNIRAQTILDLGRQFNIALPAQTLETLIPHVQVTSTEPDLVSFLTKLDWGVKVLASLDACRRVAFENIEDAARNGLHYVELRFSPGYMAMAHQLPIAGVVEAVIDGVRDGCNTFGVEARLIGIMSRTFGEAACLQELDALLAHREKITALDLAGDELGFPGSLFLSHFNRARDAGWHITVHAGEAAGPESIWQAIRELGAERIGHGVKAVEDRALMDFLAQQRIGIESCLTSNIQTSTVASLADHPLKTFLEHGVLASLNTDDPAVQGVDIIHEYHVAAPAAGLSREQIRQAQINGLEIAFLSDDEKRALREKVAAA</sequence>
<reference key="1">
    <citation type="journal article" date="2011" name="J. Bacteriol.">
        <title>Comparative genomics of 28 Salmonella enterica isolates: evidence for CRISPR-mediated adaptive sublineage evolution.</title>
        <authorList>
            <person name="Fricke W.F."/>
            <person name="Mammel M.K."/>
            <person name="McDermott P.F."/>
            <person name="Tartera C."/>
            <person name="White D.G."/>
            <person name="Leclerc J.E."/>
            <person name="Ravel J."/>
            <person name="Cebula T.A."/>
        </authorList>
    </citation>
    <scope>NUCLEOTIDE SEQUENCE [LARGE SCALE GENOMIC DNA]</scope>
    <source>
        <strain>CVM19633</strain>
    </source>
</reference>
<feature type="chain" id="PRO_1000128866" description="Adenosine deaminase">
    <location>
        <begin position="1"/>
        <end position="333"/>
    </location>
</feature>
<feature type="active site" description="Proton donor" evidence="1">
    <location>
        <position position="200"/>
    </location>
</feature>
<feature type="binding site" evidence="1">
    <location>
        <position position="12"/>
    </location>
    <ligand>
        <name>Zn(2+)</name>
        <dbReference type="ChEBI" id="CHEBI:29105"/>
        <note>catalytic</note>
    </ligand>
</feature>
<feature type="binding site" evidence="1">
    <location>
        <position position="14"/>
    </location>
    <ligand>
        <name>substrate</name>
    </ligand>
</feature>
<feature type="binding site" evidence="1">
    <location>
        <position position="14"/>
    </location>
    <ligand>
        <name>Zn(2+)</name>
        <dbReference type="ChEBI" id="CHEBI:29105"/>
        <note>catalytic</note>
    </ligand>
</feature>
<feature type="binding site" evidence="1">
    <location>
        <position position="16"/>
    </location>
    <ligand>
        <name>substrate</name>
    </ligand>
</feature>
<feature type="binding site" evidence="1">
    <location>
        <position position="170"/>
    </location>
    <ligand>
        <name>substrate</name>
    </ligand>
</feature>
<feature type="binding site" evidence="1">
    <location>
        <position position="197"/>
    </location>
    <ligand>
        <name>Zn(2+)</name>
        <dbReference type="ChEBI" id="CHEBI:29105"/>
        <note>catalytic</note>
    </ligand>
</feature>
<feature type="binding site" evidence="1">
    <location>
        <position position="278"/>
    </location>
    <ligand>
        <name>Zn(2+)</name>
        <dbReference type="ChEBI" id="CHEBI:29105"/>
        <note>catalytic</note>
    </ligand>
</feature>
<feature type="binding site" evidence="1">
    <location>
        <position position="279"/>
    </location>
    <ligand>
        <name>substrate</name>
    </ligand>
</feature>
<feature type="site" description="Important for catalytic activity" evidence="1">
    <location>
        <position position="221"/>
    </location>
</feature>
<comment type="function">
    <text evidence="1">Catalyzes the hydrolytic deamination of adenosine and 2-deoxyadenosine.</text>
</comment>
<comment type="catalytic activity">
    <reaction evidence="1">
        <text>adenosine + H2O + H(+) = inosine + NH4(+)</text>
        <dbReference type="Rhea" id="RHEA:24408"/>
        <dbReference type="ChEBI" id="CHEBI:15377"/>
        <dbReference type="ChEBI" id="CHEBI:15378"/>
        <dbReference type="ChEBI" id="CHEBI:16335"/>
        <dbReference type="ChEBI" id="CHEBI:17596"/>
        <dbReference type="ChEBI" id="CHEBI:28938"/>
        <dbReference type="EC" id="3.5.4.4"/>
    </reaction>
    <physiologicalReaction direction="left-to-right" evidence="1">
        <dbReference type="Rhea" id="RHEA:24409"/>
    </physiologicalReaction>
</comment>
<comment type="catalytic activity">
    <reaction evidence="1">
        <text>2'-deoxyadenosine + H2O + H(+) = 2'-deoxyinosine + NH4(+)</text>
        <dbReference type="Rhea" id="RHEA:28190"/>
        <dbReference type="ChEBI" id="CHEBI:15377"/>
        <dbReference type="ChEBI" id="CHEBI:15378"/>
        <dbReference type="ChEBI" id="CHEBI:17256"/>
        <dbReference type="ChEBI" id="CHEBI:28938"/>
        <dbReference type="ChEBI" id="CHEBI:28997"/>
        <dbReference type="EC" id="3.5.4.4"/>
    </reaction>
    <physiologicalReaction direction="left-to-right" evidence="1">
        <dbReference type="Rhea" id="RHEA:28191"/>
    </physiologicalReaction>
</comment>
<comment type="cofactor">
    <cofactor evidence="1">
        <name>Zn(2+)</name>
        <dbReference type="ChEBI" id="CHEBI:29105"/>
    </cofactor>
    <text evidence="1">Binds 1 zinc ion per subunit.</text>
</comment>
<comment type="similarity">
    <text evidence="1">Belongs to the metallo-dependent hydrolases superfamily. Adenosine and AMP deaminases family. Adenosine deaminase subfamily.</text>
</comment>
<dbReference type="EC" id="3.5.4.4" evidence="1"/>
<dbReference type="EMBL" id="CP001127">
    <property type="protein sequence ID" value="ACF90231.1"/>
    <property type="molecule type" value="Genomic_DNA"/>
</dbReference>
<dbReference type="RefSeq" id="WP_000565564.1">
    <property type="nucleotide sequence ID" value="NC_011094.1"/>
</dbReference>
<dbReference type="SMR" id="B4TVC7"/>
<dbReference type="KEGG" id="sew:SeSA_A1561"/>
<dbReference type="HOGENOM" id="CLU_039228_0_2_6"/>
<dbReference type="Proteomes" id="UP000001865">
    <property type="component" value="Chromosome"/>
</dbReference>
<dbReference type="GO" id="GO:0005829">
    <property type="term" value="C:cytosol"/>
    <property type="evidence" value="ECO:0007669"/>
    <property type="project" value="TreeGrafter"/>
</dbReference>
<dbReference type="GO" id="GO:0046936">
    <property type="term" value="F:2'-deoxyadenosine deaminase activity"/>
    <property type="evidence" value="ECO:0007669"/>
    <property type="project" value="RHEA"/>
</dbReference>
<dbReference type="GO" id="GO:0004000">
    <property type="term" value="F:adenosine deaminase activity"/>
    <property type="evidence" value="ECO:0007669"/>
    <property type="project" value="UniProtKB-UniRule"/>
</dbReference>
<dbReference type="GO" id="GO:0008270">
    <property type="term" value="F:zinc ion binding"/>
    <property type="evidence" value="ECO:0007669"/>
    <property type="project" value="UniProtKB-UniRule"/>
</dbReference>
<dbReference type="GO" id="GO:0006154">
    <property type="term" value="P:adenosine catabolic process"/>
    <property type="evidence" value="ECO:0007669"/>
    <property type="project" value="TreeGrafter"/>
</dbReference>
<dbReference type="GO" id="GO:0043103">
    <property type="term" value="P:hypoxanthine salvage"/>
    <property type="evidence" value="ECO:0007669"/>
    <property type="project" value="TreeGrafter"/>
</dbReference>
<dbReference type="GO" id="GO:0046103">
    <property type="term" value="P:inosine biosynthetic process"/>
    <property type="evidence" value="ECO:0007669"/>
    <property type="project" value="TreeGrafter"/>
</dbReference>
<dbReference type="GO" id="GO:0009117">
    <property type="term" value="P:nucleotide metabolic process"/>
    <property type="evidence" value="ECO:0007669"/>
    <property type="project" value="UniProtKB-KW"/>
</dbReference>
<dbReference type="GO" id="GO:0009168">
    <property type="term" value="P:purine ribonucleoside monophosphate biosynthetic process"/>
    <property type="evidence" value="ECO:0007669"/>
    <property type="project" value="UniProtKB-UniRule"/>
</dbReference>
<dbReference type="CDD" id="cd01320">
    <property type="entry name" value="ADA"/>
    <property type="match status" value="1"/>
</dbReference>
<dbReference type="FunFam" id="3.20.20.140:FF:000009">
    <property type="entry name" value="Adenosine deaminase"/>
    <property type="match status" value="1"/>
</dbReference>
<dbReference type="Gene3D" id="3.20.20.140">
    <property type="entry name" value="Metal-dependent hydrolases"/>
    <property type="match status" value="1"/>
</dbReference>
<dbReference type="HAMAP" id="MF_00540">
    <property type="entry name" value="A_deaminase"/>
    <property type="match status" value="1"/>
</dbReference>
<dbReference type="InterPro" id="IPR006650">
    <property type="entry name" value="A/AMP_deam_AS"/>
</dbReference>
<dbReference type="InterPro" id="IPR028893">
    <property type="entry name" value="A_deaminase"/>
</dbReference>
<dbReference type="InterPro" id="IPR001365">
    <property type="entry name" value="A_deaminase_dom"/>
</dbReference>
<dbReference type="InterPro" id="IPR006330">
    <property type="entry name" value="Ado/ade_deaminase"/>
</dbReference>
<dbReference type="InterPro" id="IPR032466">
    <property type="entry name" value="Metal_Hydrolase"/>
</dbReference>
<dbReference type="NCBIfam" id="TIGR01430">
    <property type="entry name" value="aden_deam"/>
    <property type="match status" value="1"/>
</dbReference>
<dbReference type="NCBIfam" id="NF006846">
    <property type="entry name" value="PRK09358.1-1"/>
    <property type="match status" value="1"/>
</dbReference>
<dbReference type="PANTHER" id="PTHR11409">
    <property type="entry name" value="ADENOSINE DEAMINASE"/>
    <property type="match status" value="1"/>
</dbReference>
<dbReference type="PANTHER" id="PTHR11409:SF43">
    <property type="entry name" value="ADENOSINE DEAMINASE"/>
    <property type="match status" value="1"/>
</dbReference>
<dbReference type="Pfam" id="PF00962">
    <property type="entry name" value="A_deaminase"/>
    <property type="match status" value="1"/>
</dbReference>
<dbReference type="SUPFAM" id="SSF51556">
    <property type="entry name" value="Metallo-dependent hydrolases"/>
    <property type="match status" value="1"/>
</dbReference>
<dbReference type="PROSITE" id="PS00485">
    <property type="entry name" value="A_DEAMINASE"/>
    <property type="match status" value="1"/>
</dbReference>
<name>ADD_SALSV</name>
<proteinExistence type="inferred from homology"/>
<evidence type="ECO:0000255" key="1">
    <source>
        <dbReference type="HAMAP-Rule" id="MF_00540"/>
    </source>
</evidence>
<accession>B4TVC7</accession>
<gene>
    <name evidence="1" type="primary">add</name>
    <name type="ordered locus">SeSA_A1561</name>
</gene>
<keyword id="KW-0378">Hydrolase</keyword>
<keyword id="KW-0479">Metal-binding</keyword>
<keyword id="KW-0546">Nucleotide metabolism</keyword>
<keyword id="KW-0862">Zinc</keyword>